<name>TAL_CLOPS</name>
<keyword id="KW-0963">Cytoplasm</keyword>
<keyword id="KW-0570">Pentose shunt</keyword>
<keyword id="KW-0704">Schiff base</keyword>
<keyword id="KW-0808">Transferase</keyword>
<protein>
    <recommendedName>
        <fullName evidence="1">Probable transaldolase</fullName>
        <ecNumber evidence="1">2.2.1.2</ecNumber>
    </recommendedName>
</protein>
<gene>
    <name evidence="1" type="primary">tal</name>
    <name type="ordered locus">CPR_0683</name>
</gene>
<evidence type="ECO:0000255" key="1">
    <source>
        <dbReference type="HAMAP-Rule" id="MF_00494"/>
    </source>
</evidence>
<comment type="function">
    <text evidence="1">Transaldolase is important for the balance of metabolites in the pentose-phosphate pathway.</text>
</comment>
<comment type="catalytic activity">
    <reaction evidence="1">
        <text>D-sedoheptulose 7-phosphate + D-glyceraldehyde 3-phosphate = D-erythrose 4-phosphate + beta-D-fructose 6-phosphate</text>
        <dbReference type="Rhea" id="RHEA:17053"/>
        <dbReference type="ChEBI" id="CHEBI:16897"/>
        <dbReference type="ChEBI" id="CHEBI:57483"/>
        <dbReference type="ChEBI" id="CHEBI:57634"/>
        <dbReference type="ChEBI" id="CHEBI:59776"/>
        <dbReference type="EC" id="2.2.1.2"/>
    </reaction>
</comment>
<comment type="pathway">
    <text evidence="1">Carbohydrate degradation; pentose phosphate pathway; D-glyceraldehyde 3-phosphate and beta-D-fructose 6-phosphate from D-ribose 5-phosphate and D-xylulose 5-phosphate (non-oxidative stage): step 2/3.</text>
</comment>
<comment type="subcellular location">
    <subcellularLocation>
        <location evidence="1">Cytoplasm</location>
    </subcellularLocation>
</comment>
<comment type="similarity">
    <text evidence="1">Belongs to the transaldolase family. Type 3B subfamily.</text>
</comment>
<proteinExistence type="inferred from homology"/>
<dbReference type="EC" id="2.2.1.2" evidence="1"/>
<dbReference type="EMBL" id="CP000312">
    <property type="protein sequence ID" value="ABG86705.1"/>
    <property type="molecule type" value="Genomic_DNA"/>
</dbReference>
<dbReference type="RefSeq" id="WP_011591760.1">
    <property type="nucleotide sequence ID" value="NC_008262.1"/>
</dbReference>
<dbReference type="SMR" id="Q0SV41"/>
<dbReference type="KEGG" id="cpr:CPR_0683"/>
<dbReference type="UniPathway" id="UPA00115">
    <property type="reaction ID" value="UER00414"/>
</dbReference>
<dbReference type="Proteomes" id="UP000001824">
    <property type="component" value="Chromosome"/>
</dbReference>
<dbReference type="GO" id="GO:0005737">
    <property type="term" value="C:cytoplasm"/>
    <property type="evidence" value="ECO:0007669"/>
    <property type="project" value="UniProtKB-SubCell"/>
</dbReference>
<dbReference type="GO" id="GO:0016832">
    <property type="term" value="F:aldehyde-lyase activity"/>
    <property type="evidence" value="ECO:0007669"/>
    <property type="project" value="InterPro"/>
</dbReference>
<dbReference type="GO" id="GO:0004801">
    <property type="term" value="F:transaldolase activity"/>
    <property type="evidence" value="ECO:0007669"/>
    <property type="project" value="UniProtKB-UniRule"/>
</dbReference>
<dbReference type="GO" id="GO:0005975">
    <property type="term" value="P:carbohydrate metabolic process"/>
    <property type="evidence" value="ECO:0007669"/>
    <property type="project" value="InterPro"/>
</dbReference>
<dbReference type="GO" id="GO:0006098">
    <property type="term" value="P:pentose-phosphate shunt"/>
    <property type="evidence" value="ECO:0007669"/>
    <property type="project" value="UniProtKB-UniRule"/>
</dbReference>
<dbReference type="CDD" id="cd00956">
    <property type="entry name" value="Transaldolase_FSA"/>
    <property type="match status" value="1"/>
</dbReference>
<dbReference type="FunFam" id="3.20.20.70:FF:000018">
    <property type="entry name" value="Probable transaldolase"/>
    <property type="match status" value="1"/>
</dbReference>
<dbReference type="Gene3D" id="3.20.20.70">
    <property type="entry name" value="Aldolase class I"/>
    <property type="match status" value="1"/>
</dbReference>
<dbReference type="HAMAP" id="MF_00494">
    <property type="entry name" value="Transaldolase_3b"/>
    <property type="match status" value="1"/>
</dbReference>
<dbReference type="InterPro" id="IPR013785">
    <property type="entry name" value="Aldolase_TIM"/>
</dbReference>
<dbReference type="InterPro" id="IPR001585">
    <property type="entry name" value="TAL/FSA"/>
</dbReference>
<dbReference type="InterPro" id="IPR022999">
    <property type="entry name" value="Transaldolase_3B"/>
</dbReference>
<dbReference type="InterPro" id="IPR004731">
    <property type="entry name" value="Transaldolase_3B/F6P_aldolase"/>
</dbReference>
<dbReference type="InterPro" id="IPR018225">
    <property type="entry name" value="Transaldolase_AS"/>
</dbReference>
<dbReference type="InterPro" id="IPR033919">
    <property type="entry name" value="TSA/FSA_arc/bac"/>
</dbReference>
<dbReference type="NCBIfam" id="TIGR00875">
    <property type="entry name" value="fsa_talC_mipB"/>
    <property type="match status" value="1"/>
</dbReference>
<dbReference type="PANTHER" id="PTHR10683">
    <property type="entry name" value="TRANSALDOLASE"/>
    <property type="match status" value="1"/>
</dbReference>
<dbReference type="PANTHER" id="PTHR10683:SF36">
    <property type="entry name" value="TRANSALDOLASE"/>
    <property type="match status" value="1"/>
</dbReference>
<dbReference type="Pfam" id="PF00923">
    <property type="entry name" value="TAL_FSA"/>
    <property type="match status" value="1"/>
</dbReference>
<dbReference type="SUPFAM" id="SSF51569">
    <property type="entry name" value="Aldolase"/>
    <property type="match status" value="1"/>
</dbReference>
<dbReference type="PROSITE" id="PS01054">
    <property type="entry name" value="TRANSALDOLASE_1"/>
    <property type="match status" value="1"/>
</dbReference>
<dbReference type="PROSITE" id="PS00958">
    <property type="entry name" value="TRANSALDOLASE_2"/>
    <property type="match status" value="1"/>
</dbReference>
<feature type="chain" id="PRO_1000126302" description="Probable transaldolase">
    <location>
        <begin position="1"/>
        <end position="215"/>
    </location>
</feature>
<feature type="active site" description="Schiff-base intermediate with substrate" evidence="1">
    <location>
        <position position="83"/>
    </location>
</feature>
<accession>Q0SV41</accession>
<reference key="1">
    <citation type="journal article" date="2006" name="Genome Res.">
        <title>Skewed genomic variability in strains of the toxigenic bacterial pathogen, Clostridium perfringens.</title>
        <authorList>
            <person name="Myers G.S.A."/>
            <person name="Rasko D.A."/>
            <person name="Cheung J.K."/>
            <person name="Ravel J."/>
            <person name="Seshadri R."/>
            <person name="DeBoy R.T."/>
            <person name="Ren Q."/>
            <person name="Varga J."/>
            <person name="Awad M.M."/>
            <person name="Brinkac L.M."/>
            <person name="Daugherty S.C."/>
            <person name="Haft D.H."/>
            <person name="Dodson R.J."/>
            <person name="Madupu R."/>
            <person name="Nelson W.C."/>
            <person name="Rosovitz M.J."/>
            <person name="Sullivan S.A."/>
            <person name="Khouri H."/>
            <person name="Dimitrov G.I."/>
            <person name="Watkins K.L."/>
            <person name="Mulligan S."/>
            <person name="Benton J."/>
            <person name="Radune D."/>
            <person name="Fisher D.J."/>
            <person name="Atkins H.S."/>
            <person name="Hiscox T."/>
            <person name="Jost B.H."/>
            <person name="Billington S.J."/>
            <person name="Songer J.G."/>
            <person name="McClane B.A."/>
            <person name="Titball R.W."/>
            <person name="Rood J.I."/>
            <person name="Melville S.B."/>
            <person name="Paulsen I.T."/>
        </authorList>
    </citation>
    <scope>NUCLEOTIDE SEQUENCE [LARGE SCALE GENOMIC DNA]</scope>
    <source>
        <strain>SM101 / Type A</strain>
    </source>
</reference>
<organism>
    <name type="scientific">Clostridium perfringens (strain SM101 / Type A)</name>
    <dbReference type="NCBI Taxonomy" id="289380"/>
    <lineage>
        <taxon>Bacteria</taxon>
        <taxon>Bacillati</taxon>
        <taxon>Bacillota</taxon>
        <taxon>Clostridia</taxon>
        <taxon>Eubacteriales</taxon>
        <taxon>Clostridiaceae</taxon>
        <taxon>Clostridium</taxon>
    </lineage>
</organism>
<sequence>MKIFIDTANVEEIRKASKLGVLAGVTTNPSLIAKEGRDIKEVIEEICSIVDGPISAEVMALECDEMVREGIELAKIHKNIVIKIPMCEEGLKAVKVLASEGIRTNVTLIFSPLQALLAARAGASFVSPFLGRLDDIGNPGIEIVTQIAEMFALHGIDTEIISASVRNPMHVLDSAMAGSHIATIPYNVILQMVKHPLTDAGMKKFIEDYNKAFNK</sequence>